<name>GRM8_MOUSE</name>
<accession>P47743</accession>
<accession>Q6B964</accession>
<feature type="signal peptide" evidence="2">
    <location>
        <begin position="1"/>
        <end position="33"/>
    </location>
</feature>
<feature type="chain" id="PRO_0000012942" description="Metabotropic glutamate receptor 8">
    <location>
        <begin position="34"/>
        <end position="908"/>
    </location>
</feature>
<feature type="topological domain" description="Extracellular" evidence="2">
    <location>
        <begin position="34"/>
        <end position="583"/>
    </location>
</feature>
<feature type="transmembrane region" description="Helical; Name=1" evidence="2">
    <location>
        <begin position="584"/>
        <end position="608"/>
    </location>
</feature>
<feature type="topological domain" description="Cytoplasmic" evidence="2">
    <location>
        <begin position="609"/>
        <end position="620"/>
    </location>
</feature>
<feature type="transmembrane region" description="Helical; Name=2" evidence="2">
    <location>
        <begin position="621"/>
        <end position="641"/>
    </location>
</feature>
<feature type="topological domain" description="Extracellular" evidence="2">
    <location>
        <begin position="642"/>
        <end position="647"/>
    </location>
</feature>
<feature type="transmembrane region" description="Helical; Name=3" evidence="2">
    <location>
        <begin position="648"/>
        <end position="668"/>
    </location>
</feature>
<feature type="topological domain" description="Cytoplasmic" evidence="2">
    <location>
        <begin position="669"/>
        <end position="695"/>
    </location>
</feature>
<feature type="transmembrane region" description="Helical; Name=4" evidence="2">
    <location>
        <begin position="696"/>
        <end position="716"/>
    </location>
</feature>
<feature type="topological domain" description="Extracellular" evidence="2">
    <location>
        <begin position="717"/>
        <end position="746"/>
    </location>
</feature>
<feature type="transmembrane region" description="Helical; Name=5" evidence="2">
    <location>
        <begin position="747"/>
        <end position="768"/>
    </location>
</feature>
<feature type="topological domain" description="Cytoplasmic" evidence="2">
    <location>
        <begin position="769"/>
        <end position="781"/>
    </location>
</feature>
<feature type="transmembrane region" description="Helical; Name=6" evidence="2">
    <location>
        <begin position="782"/>
        <end position="803"/>
    </location>
</feature>
<feature type="topological domain" description="Extracellular" evidence="2">
    <location>
        <begin position="804"/>
        <end position="818"/>
    </location>
</feature>
<feature type="transmembrane region" description="Helical; Name=7" evidence="2">
    <location>
        <begin position="819"/>
        <end position="843"/>
    </location>
</feature>
<feature type="topological domain" description="Cytoplasmic" evidence="2">
    <location>
        <begin position="844"/>
        <end position="908"/>
    </location>
</feature>
<feature type="binding site" evidence="1">
    <location>
        <position position="156"/>
    </location>
    <ligand>
        <name>L-glutamate</name>
        <dbReference type="ChEBI" id="CHEBI:29985"/>
    </ligand>
</feature>
<feature type="binding site" evidence="1">
    <location>
        <begin position="177"/>
        <end position="179"/>
    </location>
    <ligand>
        <name>L-glutamate</name>
        <dbReference type="ChEBI" id="CHEBI:29985"/>
    </ligand>
</feature>
<feature type="binding site" evidence="1">
    <location>
        <position position="227"/>
    </location>
    <ligand>
        <name>L-glutamate</name>
        <dbReference type="ChEBI" id="CHEBI:29985"/>
    </ligand>
</feature>
<feature type="binding site" evidence="1">
    <location>
        <position position="309"/>
    </location>
    <ligand>
        <name>L-glutamate</name>
        <dbReference type="ChEBI" id="CHEBI:29985"/>
    </ligand>
</feature>
<feature type="binding site" evidence="1">
    <location>
        <position position="401"/>
    </location>
    <ligand>
        <name>L-glutamate</name>
        <dbReference type="ChEBI" id="CHEBI:29985"/>
    </ligand>
</feature>
<feature type="glycosylation site" description="N-linked (GlcNAc...) asparagine" evidence="2">
    <location>
        <position position="95"/>
    </location>
</feature>
<feature type="glycosylation site" description="N-linked (GlcNAc...) asparagine" evidence="2">
    <location>
        <position position="298"/>
    </location>
</feature>
<feature type="glycosylation site" description="N-linked (GlcNAc...) asparagine" evidence="2">
    <location>
        <position position="452"/>
    </location>
</feature>
<feature type="glycosylation site" description="N-linked (GlcNAc...) asparagine" evidence="2">
    <location>
        <position position="480"/>
    </location>
</feature>
<feature type="glycosylation site" description="N-linked (GlcNAc...) asparagine" evidence="2">
    <location>
        <position position="565"/>
    </location>
</feature>
<feature type="disulfide bond" evidence="1">
    <location>
        <begin position="64"/>
        <end position="106"/>
    </location>
</feature>
<feature type="disulfide bond" evidence="1">
    <location>
        <begin position="246"/>
        <end position="534"/>
    </location>
</feature>
<feature type="disulfide bond" evidence="1">
    <location>
        <begin position="369"/>
        <end position="384"/>
    </location>
</feature>
<feature type="disulfide bond" evidence="1">
    <location>
        <begin position="424"/>
        <end position="431"/>
    </location>
</feature>
<feature type="disulfide bond" evidence="1">
    <location>
        <begin position="516"/>
        <end position="535"/>
    </location>
</feature>
<feature type="disulfide bond" evidence="1">
    <location>
        <begin position="520"/>
        <end position="538"/>
    </location>
</feature>
<feature type="disulfide bond" evidence="1">
    <location>
        <begin position="541"/>
        <end position="553"/>
    </location>
</feature>
<feature type="disulfide bond" evidence="1">
    <location>
        <begin position="556"/>
        <end position="569"/>
    </location>
</feature>
<feature type="cross-link" description="Glycyl lysine isopeptide (Lys-Gly) (interchain with G-Cter in SUMO1)" evidence="3">
    <location>
        <position position="882"/>
    </location>
</feature>
<feature type="mutagenesis site" description="No change in sumoylation. Abolishes sumoylation; when associated with R-872 and R-882." evidence="3">
    <original>K</original>
    <variation>R</variation>
    <location>
        <position position="868"/>
    </location>
</feature>
<feature type="mutagenesis site" description="No change in sumoylation. Abolishes sumoylation; when associated with R-868 and R-882." evidence="3">
    <original>K</original>
    <variation>R</variation>
    <location>
        <position position="872"/>
    </location>
</feature>
<feature type="mutagenesis site" description="Abolishes sumoylation. Abolishes sumoylation; when associated with R-868 and R-872." evidence="3">
    <original>K</original>
    <variation>R</variation>
    <location>
        <position position="882"/>
    </location>
</feature>
<feature type="sequence conflict" description="In Ref. 1; AAA68149." evidence="4" ref="1">
    <original>I</original>
    <variation>T</variation>
    <location>
        <position position="86"/>
    </location>
</feature>
<feature type="sequence conflict" description="In Ref. 1; AAA68149." evidence="4" ref="1">
    <original>R</original>
    <variation>G</variation>
    <location>
        <position position="289"/>
    </location>
</feature>
<feature type="sequence conflict" description="In Ref. 1; AAA68149." evidence="4" ref="1">
    <original>WEE</original>
    <variation>SEG</variation>
    <location>
        <begin position="363"/>
        <end position="365"/>
    </location>
</feature>
<feature type="sequence conflict" description="In Ref. 1; AAA68149." evidence="4" ref="1">
    <original>L</original>
    <variation>S</variation>
    <location>
        <position position="371"/>
    </location>
</feature>
<feature type="sequence conflict" description="In Ref. 1; AAA68149." evidence="4" ref="1">
    <original>E</original>
    <variation>G</variation>
    <location>
        <position position="539"/>
    </location>
</feature>
<feature type="sequence conflict" description="In Ref. 1; AAA68149." evidence="4" ref="1">
    <original>F</original>
    <variation>L</variation>
    <location>
        <position position="589"/>
    </location>
</feature>
<feature type="sequence conflict" description="In Ref. 1; AAA68149." evidence="4" ref="1">
    <original>N</original>
    <variation>D</variation>
    <location>
        <position position="905"/>
    </location>
</feature>
<comment type="function">
    <text>G-protein coupled receptor for glutamate. Ligand binding causes a conformation change that triggers signaling via guanine nucleotide-binding proteins (G proteins) and modulates the activity of down-stream effectors. Signaling inhibits adenylate cyclase activity.</text>
</comment>
<comment type="subunit">
    <text evidence="1">Interacts with PICK1.</text>
</comment>
<comment type="subcellular location">
    <subcellularLocation>
        <location>Cell membrane</location>
        <topology>Multi-pass membrane protein</topology>
    </subcellularLocation>
</comment>
<comment type="tissue specificity">
    <text>Strongly expressed in olfactory bulb, accessory olfactory bulb, and mammillary body. Weaker expression in the retina, and in scattered cells in the cortex and hindbrain.</text>
</comment>
<comment type="similarity">
    <text evidence="4">Belongs to the G-protein coupled receptor 3 family.</text>
</comment>
<gene>
    <name type="primary">Grm8</name>
    <name type="synonym">Gprc1h</name>
    <name type="synonym">Mglur8</name>
</gene>
<organism>
    <name type="scientific">Mus musculus</name>
    <name type="common">Mouse</name>
    <dbReference type="NCBI Taxonomy" id="10090"/>
    <lineage>
        <taxon>Eukaryota</taxon>
        <taxon>Metazoa</taxon>
        <taxon>Chordata</taxon>
        <taxon>Craniata</taxon>
        <taxon>Vertebrata</taxon>
        <taxon>Euteleostomi</taxon>
        <taxon>Mammalia</taxon>
        <taxon>Eutheria</taxon>
        <taxon>Euarchontoglires</taxon>
        <taxon>Glires</taxon>
        <taxon>Rodentia</taxon>
        <taxon>Myomorpha</taxon>
        <taxon>Muroidea</taxon>
        <taxon>Muridae</taxon>
        <taxon>Murinae</taxon>
        <taxon>Mus</taxon>
        <taxon>Mus</taxon>
    </lineage>
</organism>
<reference key="1">
    <citation type="journal article" date="1995" name="J. Neurosci.">
        <title>A novel metabotropic glutamate receptor expressed in the retina and olfactory bulb.</title>
        <authorList>
            <person name="Duvoisin R.M."/>
            <person name="Zhang C."/>
            <person name="Ramonell K."/>
        </authorList>
    </citation>
    <scope>NUCLEOTIDE SEQUENCE [MRNA]</scope>
    <source>
        <strain>C57BL/6J</strain>
        <tissue>Retina</tissue>
    </source>
</reference>
<reference key="2">
    <citation type="journal article" date="2005" name="Mol. Pharmacol.">
        <title>Coupling of metabotropic glutamate receptor 8 to N-type Ca2+ channels in rat sympathetic neurons.</title>
        <authorList>
            <person name="Guo J."/>
            <person name="Ikeda S.R."/>
        </authorList>
    </citation>
    <scope>NUCLEOTIDE SEQUENCE [MRNA]</scope>
    <source>
        <strain>BALB/cJ</strain>
        <tissue>Brain</tissue>
    </source>
</reference>
<reference key="3">
    <citation type="journal article" date="2005" name="J. Biol. Chem.">
        <title>Pias1 interaction and sumoylation of metabotropic glutamate receptor 8.</title>
        <authorList>
            <person name="Tang Z."/>
            <person name="El Far O."/>
            <person name="Betz H."/>
            <person name="Scheschonka A."/>
        </authorList>
    </citation>
    <scope>SUMOYLATION AT LYS-882</scope>
    <scope>MUTAGENESIS OF LYS-868; LYS-872 AND LYS-882</scope>
</reference>
<evidence type="ECO:0000250" key="1"/>
<evidence type="ECO:0000255" key="2"/>
<evidence type="ECO:0000269" key="3">
    <source>
    </source>
</evidence>
<evidence type="ECO:0000305" key="4"/>
<keyword id="KW-1003">Cell membrane</keyword>
<keyword id="KW-1015">Disulfide bond</keyword>
<keyword id="KW-0297">G-protein coupled receptor</keyword>
<keyword id="KW-0325">Glycoprotein</keyword>
<keyword id="KW-1017">Isopeptide bond</keyword>
<keyword id="KW-0472">Membrane</keyword>
<keyword id="KW-0675">Receptor</keyword>
<keyword id="KW-1185">Reference proteome</keyword>
<keyword id="KW-0716">Sensory transduction</keyword>
<keyword id="KW-0732">Signal</keyword>
<keyword id="KW-0807">Transducer</keyword>
<keyword id="KW-0812">Transmembrane</keyword>
<keyword id="KW-1133">Transmembrane helix</keyword>
<keyword id="KW-0832">Ubl conjugation</keyword>
<sequence length="908" mass="101828">MVCEGKRSTSCPCFFLLTAKFYWILTMMQRTHSQEYAHSIRLDGDIILGGLFPVHAKGERGVPCGDLKKEKGIHRLEAMLYAIDQINKDPDLLSNITLGVRILDTCSRDTYALEQSLTFVQALIEKDASDVKCANGDPPIFTKPDKISGVIGAAASSVSIMVANILRLFKIPQISYASTAPELSDNTRYDFFSRVVPPDSYQAQAMVDIVTALGWNYVSTLASEGNYGESGVEAFTQISREIGGVCIAQSQKIPREPRPGEFEKIIKRLLETPNARAVIMFANEDDIRRILEAAKKLNQSGHFLWIGSDSWGSKIAPVYQQEEIAEGAVTILPKRASIDGFDRYFRSRTLANNRRNVWFAEFWEENFGCKLGSHGKRNSHIKKCTGLERIARDSSYEQEGKVQFVIDAVYSMAYALHNMHKELCPGYIGLCPRMVTIDGKELLGYIRAVNFNGSAGTPVTFNENGDAPGRYDIFQYQINNKSTEYKIIGHWTNQLHLKVEDMQWANREHTHPASVCSLPCKPGERKKTVKGVPCCWHCERCEGYNYQVDELSCELCPLDQRPNINRTGCQRIPIIKLEWHSPWAVVPVFIAILGIIATTFVIVTFVRYNDTPIVRASGRELSYVLLTGIFLCYSITFLMIAAPDTIICSFRRIFLGLGMCFSYAALLTKTNRIHRIFEQGKKSVTAPKFISPASQLVITFSLISVQLLGVFVWFVVDPPHTIIDYGEQRTLDPENARGVLKCDISDLSLICSLGYSILLMVTCTVYAIKTRGVPETFNEAKPIGFTMYTTCIIWLAFIPIFFGTAQSAEKMYIQTTTLTVSMSLSASVSLGMLYMPKVYIIIFHPEQNVQKRKRSFKAVVTAATMQSKLIQKGNDRPNGEVKSELCESLETNTSSTKTTYISYSNHSI</sequence>
<protein>
    <recommendedName>
        <fullName>Metabotropic glutamate receptor 8</fullName>
        <shortName>mGluR8</shortName>
    </recommendedName>
</protein>
<proteinExistence type="evidence at protein level"/>
<dbReference type="EMBL" id="U17252">
    <property type="protein sequence ID" value="AAA68149.1"/>
    <property type="molecule type" value="mRNA"/>
</dbReference>
<dbReference type="EMBL" id="AY673682">
    <property type="protein sequence ID" value="AAT76980.1"/>
    <property type="molecule type" value="mRNA"/>
</dbReference>
<dbReference type="CCDS" id="CCDS80495.1"/>
<dbReference type="PIR" id="I49142">
    <property type="entry name" value="I49142"/>
</dbReference>
<dbReference type="RefSeq" id="NP_001298001.1">
    <property type="nucleotide sequence ID" value="NM_001311072.2"/>
</dbReference>
<dbReference type="RefSeq" id="NP_001396830.1">
    <property type="nucleotide sequence ID" value="NM_001409901.1"/>
</dbReference>
<dbReference type="RefSeq" id="NP_001396832.1">
    <property type="nucleotide sequence ID" value="NM_001409903.1"/>
</dbReference>
<dbReference type="RefSeq" id="NP_001396833.1">
    <property type="nucleotide sequence ID" value="NM_001409904.1"/>
</dbReference>
<dbReference type="RefSeq" id="XP_017176886.1">
    <property type="nucleotide sequence ID" value="XM_017321397.1"/>
</dbReference>
<dbReference type="SMR" id="P47743"/>
<dbReference type="BioGRID" id="200074">
    <property type="interactions" value="5"/>
</dbReference>
<dbReference type="FunCoup" id="P47743">
    <property type="interactions" value="769"/>
</dbReference>
<dbReference type="IntAct" id="P47743">
    <property type="interactions" value="1"/>
</dbReference>
<dbReference type="MINT" id="P47743"/>
<dbReference type="STRING" id="10090.ENSMUSP00000110978"/>
<dbReference type="BindingDB" id="P47743"/>
<dbReference type="ChEMBL" id="CHEMBL4626"/>
<dbReference type="DrugCentral" id="P47743"/>
<dbReference type="GlyCosmos" id="P47743">
    <property type="glycosylation" value="5 sites, No reported glycans"/>
</dbReference>
<dbReference type="GlyGen" id="P47743">
    <property type="glycosylation" value="7 sites, 3 N-linked glycans (4 sites), 1 O-linked glycan (1 site)"/>
</dbReference>
<dbReference type="iPTMnet" id="P47743"/>
<dbReference type="PhosphoSitePlus" id="P47743"/>
<dbReference type="PaxDb" id="10090-ENSMUSP00000110978"/>
<dbReference type="ProteomicsDB" id="269638"/>
<dbReference type="Antibodypedia" id="17706">
    <property type="antibodies" value="371 antibodies from 34 providers"/>
</dbReference>
<dbReference type="DNASU" id="14823"/>
<dbReference type="Ensembl" id="ENSMUST00000090512.10">
    <property type="protein sequence ID" value="ENSMUSP00000087998.4"/>
    <property type="gene ID" value="ENSMUSG00000024211.16"/>
</dbReference>
<dbReference type="GeneID" id="14823"/>
<dbReference type="KEGG" id="mmu:14823"/>
<dbReference type="UCSC" id="uc009bcj.1">
    <property type="organism name" value="mouse"/>
</dbReference>
<dbReference type="AGR" id="MGI:1351345"/>
<dbReference type="CTD" id="2918"/>
<dbReference type="MGI" id="MGI:1351345">
    <property type="gene designation" value="Grm8"/>
</dbReference>
<dbReference type="VEuPathDB" id="HostDB:ENSMUSG00000024211"/>
<dbReference type="eggNOG" id="KOG1056">
    <property type="taxonomic scope" value="Eukaryota"/>
</dbReference>
<dbReference type="GeneTree" id="ENSGT01030000234648"/>
<dbReference type="HOGENOM" id="CLU_005389_0_0_1"/>
<dbReference type="InParanoid" id="P47743"/>
<dbReference type="OrthoDB" id="425344at2759"/>
<dbReference type="PhylomeDB" id="P47743"/>
<dbReference type="Reactome" id="R-MMU-418594">
    <property type="pathway name" value="G alpha (i) signalling events"/>
</dbReference>
<dbReference type="Reactome" id="R-MMU-420499">
    <property type="pathway name" value="Class C/3 (Metabotropic glutamate/pheromone receptors)"/>
</dbReference>
<dbReference type="BioGRID-ORCS" id="14823">
    <property type="hits" value="1 hit in 79 CRISPR screens"/>
</dbReference>
<dbReference type="ChiTaRS" id="Grm8">
    <property type="organism name" value="mouse"/>
</dbReference>
<dbReference type="PRO" id="PR:P47743"/>
<dbReference type="Proteomes" id="UP000000589">
    <property type="component" value="Chromosome 6"/>
</dbReference>
<dbReference type="RNAct" id="P47743">
    <property type="molecule type" value="protein"/>
</dbReference>
<dbReference type="Bgee" id="ENSMUSG00000024211">
    <property type="expression patterns" value="Expressed in ganglionic layer of retina and 84 other cell types or tissues"/>
</dbReference>
<dbReference type="ExpressionAtlas" id="P47743">
    <property type="expression patterns" value="baseline and differential"/>
</dbReference>
<dbReference type="GO" id="GO:0005886">
    <property type="term" value="C:plasma membrane"/>
    <property type="evidence" value="ECO:0000304"/>
    <property type="project" value="UniProtKB"/>
</dbReference>
<dbReference type="GO" id="GO:0045202">
    <property type="term" value="C:synapse"/>
    <property type="evidence" value="ECO:0007669"/>
    <property type="project" value="GOC"/>
</dbReference>
<dbReference type="GO" id="GO:0004930">
    <property type="term" value="F:G protein-coupled receptor activity"/>
    <property type="evidence" value="ECO:0000250"/>
    <property type="project" value="UniProtKB"/>
</dbReference>
<dbReference type="GO" id="GO:0008066">
    <property type="term" value="F:glutamate receptor activity"/>
    <property type="evidence" value="ECO:0000250"/>
    <property type="project" value="UniProtKB"/>
</dbReference>
<dbReference type="GO" id="GO:0001642">
    <property type="term" value="F:group III metabotropic glutamate receptor activity"/>
    <property type="evidence" value="ECO:0000314"/>
    <property type="project" value="MGI"/>
</dbReference>
<dbReference type="GO" id="GO:0007196">
    <property type="term" value="P:adenylate cyclase-inhibiting G protein-coupled glutamate receptor signaling pathway"/>
    <property type="evidence" value="ECO:0000250"/>
    <property type="project" value="UniProtKB"/>
</dbReference>
<dbReference type="GO" id="GO:0007268">
    <property type="term" value="P:chemical synaptic transmission"/>
    <property type="evidence" value="ECO:0000304"/>
    <property type="project" value="UniProtKB"/>
</dbReference>
<dbReference type="GO" id="GO:0035249">
    <property type="term" value="P:synaptic transmission, glutamatergic"/>
    <property type="evidence" value="ECO:0000304"/>
    <property type="project" value="UniProtKB"/>
</dbReference>
<dbReference type="CDD" id="cd15454">
    <property type="entry name" value="7tmC_mGluR8"/>
    <property type="match status" value="1"/>
</dbReference>
<dbReference type="CDD" id="cd06376">
    <property type="entry name" value="PBP1_mGluR_groupIII"/>
    <property type="match status" value="1"/>
</dbReference>
<dbReference type="FunFam" id="3.40.50.2300:FF:000196">
    <property type="entry name" value="Glutamate metabotropic receptor 7"/>
    <property type="match status" value="1"/>
</dbReference>
<dbReference type="FunFam" id="3.40.50.2300:FF:000009">
    <property type="entry name" value="Glutamate receptor, metabotropic 4"/>
    <property type="match status" value="1"/>
</dbReference>
<dbReference type="FunFam" id="2.10.50.30:FF:000001">
    <property type="entry name" value="metabotropic glutamate receptor 1"/>
    <property type="match status" value="1"/>
</dbReference>
<dbReference type="FunFam" id="3.40.50.2300:FF:000176">
    <property type="entry name" value="metabotropic glutamate receptor 7"/>
    <property type="match status" value="1"/>
</dbReference>
<dbReference type="Gene3D" id="3.40.50.2300">
    <property type="match status" value="2"/>
</dbReference>
<dbReference type="Gene3D" id="2.10.50.30">
    <property type="entry name" value="GPCR, family 3, nine cysteines domain"/>
    <property type="match status" value="1"/>
</dbReference>
<dbReference type="InterPro" id="IPR001828">
    <property type="entry name" value="ANF_lig-bd_rcpt"/>
</dbReference>
<dbReference type="InterPro" id="IPR000337">
    <property type="entry name" value="GPCR_3"/>
</dbReference>
<dbReference type="InterPro" id="IPR011500">
    <property type="entry name" value="GPCR_3_9-Cys_dom"/>
</dbReference>
<dbReference type="InterPro" id="IPR038550">
    <property type="entry name" value="GPCR_3_9-Cys_sf"/>
</dbReference>
<dbReference type="InterPro" id="IPR017978">
    <property type="entry name" value="GPCR_3_C"/>
</dbReference>
<dbReference type="InterPro" id="IPR017979">
    <property type="entry name" value="GPCR_3_CS"/>
</dbReference>
<dbReference type="InterPro" id="IPR000144">
    <property type="entry name" value="GPCR_3_mGluR8"/>
</dbReference>
<dbReference type="InterPro" id="IPR000162">
    <property type="entry name" value="GPCR_3_mtglu_rcpt"/>
</dbReference>
<dbReference type="InterPro" id="IPR050726">
    <property type="entry name" value="mGluR"/>
</dbReference>
<dbReference type="InterPro" id="IPR028082">
    <property type="entry name" value="Peripla_BP_I"/>
</dbReference>
<dbReference type="PANTHER" id="PTHR24060">
    <property type="entry name" value="METABOTROPIC GLUTAMATE RECEPTOR"/>
    <property type="match status" value="1"/>
</dbReference>
<dbReference type="Pfam" id="PF00003">
    <property type="entry name" value="7tm_3"/>
    <property type="match status" value="1"/>
</dbReference>
<dbReference type="Pfam" id="PF01094">
    <property type="entry name" value="ANF_receptor"/>
    <property type="match status" value="1"/>
</dbReference>
<dbReference type="Pfam" id="PF07562">
    <property type="entry name" value="NCD3G"/>
    <property type="match status" value="1"/>
</dbReference>
<dbReference type="PRINTS" id="PR00248">
    <property type="entry name" value="GPCRMGR"/>
</dbReference>
<dbReference type="PRINTS" id="PR01058">
    <property type="entry name" value="MTABOTROPC8R"/>
</dbReference>
<dbReference type="PRINTS" id="PR00593">
    <property type="entry name" value="MTABOTROPICR"/>
</dbReference>
<dbReference type="SUPFAM" id="SSF53822">
    <property type="entry name" value="Periplasmic binding protein-like I"/>
    <property type="match status" value="1"/>
</dbReference>
<dbReference type="PROSITE" id="PS00979">
    <property type="entry name" value="G_PROTEIN_RECEP_F3_1"/>
    <property type="match status" value="1"/>
</dbReference>
<dbReference type="PROSITE" id="PS00980">
    <property type="entry name" value="G_PROTEIN_RECEP_F3_2"/>
    <property type="match status" value="1"/>
</dbReference>
<dbReference type="PROSITE" id="PS00981">
    <property type="entry name" value="G_PROTEIN_RECEP_F3_3"/>
    <property type="match status" value="1"/>
</dbReference>
<dbReference type="PROSITE" id="PS50259">
    <property type="entry name" value="G_PROTEIN_RECEP_F3_4"/>
    <property type="match status" value="1"/>
</dbReference>